<evidence type="ECO:0000250" key="1">
    <source>
        <dbReference type="UniProtKB" id="Q3TEI4"/>
    </source>
</evidence>
<evidence type="ECO:0000256" key="2">
    <source>
        <dbReference type="SAM" id="MobiDB-lite"/>
    </source>
</evidence>
<evidence type="ECO:0000269" key="3">
    <source>
    </source>
</evidence>
<evidence type="ECO:0000269" key="4">
    <source>
    </source>
</evidence>
<evidence type="ECO:0000269" key="5">
    <source>
    </source>
</evidence>
<evidence type="ECO:0000269" key="6">
    <source>
    </source>
</evidence>
<evidence type="ECO:0000269" key="7">
    <source ref="4"/>
</evidence>
<evidence type="ECO:0000303" key="8">
    <source>
    </source>
</evidence>
<evidence type="ECO:0000303" key="9">
    <source>
    </source>
</evidence>
<evidence type="ECO:0000303" key="10">
    <source>
    </source>
</evidence>
<evidence type="ECO:0000303" key="11">
    <source ref="4"/>
</evidence>
<evidence type="ECO:0000305" key="12"/>
<evidence type="ECO:0007744" key="13">
    <source>
    </source>
</evidence>
<evidence type="ECO:0007744" key="14">
    <source>
    </source>
</evidence>
<evidence type="ECO:0007744" key="15">
    <source>
    </source>
</evidence>
<feature type="chain" id="PRO_0000244343" description="Uncharacterized protein C15orf39">
    <location>
        <begin position="1"/>
        <end position="1047"/>
    </location>
</feature>
<feature type="region of interest" description="Disordered" evidence="2">
    <location>
        <begin position="172"/>
        <end position="208"/>
    </location>
</feature>
<feature type="region of interest" description="Disordered" evidence="2">
    <location>
        <begin position="236"/>
        <end position="283"/>
    </location>
</feature>
<feature type="region of interest" description="Disordered" evidence="2">
    <location>
        <begin position="448"/>
        <end position="469"/>
    </location>
</feature>
<feature type="region of interest" description="Disordered" evidence="2">
    <location>
        <begin position="482"/>
        <end position="504"/>
    </location>
</feature>
<feature type="region of interest" description="Disordered" evidence="2">
    <location>
        <begin position="519"/>
        <end position="567"/>
    </location>
</feature>
<feature type="region of interest" description="Disordered" evidence="2">
    <location>
        <begin position="668"/>
        <end position="690"/>
    </location>
</feature>
<feature type="region of interest" description="Disordered" evidence="2">
    <location>
        <begin position="714"/>
        <end position="763"/>
    </location>
</feature>
<feature type="region of interest" description="Disordered" evidence="2">
    <location>
        <begin position="931"/>
        <end position="1004"/>
    </location>
</feature>
<feature type="region of interest" description="Disordered" evidence="2">
    <location>
        <begin position="1021"/>
        <end position="1047"/>
    </location>
</feature>
<feature type="compositionally biased region" description="Polar residues" evidence="2">
    <location>
        <begin position="237"/>
        <end position="254"/>
    </location>
</feature>
<feature type="compositionally biased region" description="Pro residues" evidence="2">
    <location>
        <begin position="268"/>
        <end position="283"/>
    </location>
</feature>
<feature type="compositionally biased region" description="Low complexity" evidence="2">
    <location>
        <begin position="729"/>
        <end position="741"/>
    </location>
</feature>
<feature type="compositionally biased region" description="Low complexity" evidence="2">
    <location>
        <begin position="751"/>
        <end position="762"/>
    </location>
</feature>
<feature type="compositionally biased region" description="Low complexity" evidence="2">
    <location>
        <begin position="978"/>
        <end position="996"/>
    </location>
</feature>
<feature type="modified residue" description="N6-acetyllysine" evidence="14">
    <location>
        <position position="17"/>
    </location>
</feature>
<feature type="modified residue" description="Phosphoserine" evidence="13">
    <location>
        <position position="208"/>
    </location>
</feature>
<feature type="modified residue" description="Phosphoserine" evidence="15">
    <location>
        <position position="299"/>
    </location>
</feature>
<feature type="modified residue" description="Phosphoserine" evidence="13">
    <location>
        <position position="391"/>
    </location>
</feature>
<feature type="modified residue" description="Phosphothreonine" evidence="13">
    <location>
        <position position="397"/>
    </location>
</feature>
<feature type="modified residue" description="Phosphoserine" evidence="15">
    <location>
        <position position="455"/>
    </location>
</feature>
<feature type="modified residue" description="Phosphoserine" evidence="1">
    <location>
        <position position="496"/>
    </location>
</feature>
<feature type="modified residue" description="Phosphoserine" evidence="1">
    <location>
        <position position="497"/>
    </location>
</feature>
<feature type="modified residue" description="Phosphoserine" evidence="1">
    <location>
        <position position="936"/>
    </location>
</feature>
<feature type="modified residue" description="Phosphoserine" evidence="15">
    <location>
        <position position="956"/>
    </location>
</feature>
<feature type="modified residue" description="Phosphoserine" evidence="1">
    <location>
        <position position="988"/>
    </location>
</feature>
<feature type="modified residue" description="Phosphoserine" evidence="1">
    <location>
        <position position="996"/>
    </location>
</feature>
<feature type="splice variant" id="VSP_019538" description="In isoform 3." evidence="8 9 11">
    <location>
        <begin position="1"/>
        <end position="910"/>
    </location>
</feature>
<feature type="splice variant" id="VSP_019539" description="In isoform 3." evidence="8 9 11">
    <original>DLLGLQWRDCVRRQL</original>
    <variation>MGQPQWPPELCEQVT</variation>
    <location>
        <begin position="911"/>
        <end position="925"/>
    </location>
</feature>
<feature type="splice variant" id="VSP_019540" description="In isoform 2." evidence="10">
    <original>DFDTEAGAVSSS</original>
    <variation>EHGAAPVATGAV</variation>
    <location>
        <begin position="927"/>
        <end position="938"/>
    </location>
</feature>
<feature type="splice variant" id="VSP_019541" description="In isoform 2." evidence="10">
    <location>
        <begin position="939"/>
        <end position="1047"/>
    </location>
</feature>
<feature type="sequence variant" id="VAR_026891" description="In dbSNP:rs1873379." evidence="4">
    <original>A</original>
    <variation>P</variation>
    <location>
        <position position="119"/>
    </location>
</feature>
<feature type="sequence variant" id="VAR_026892" description="In dbSNP:rs11072532." evidence="4 5 6 15">
    <original>G</original>
    <variation>D</variation>
    <location>
        <position position="491"/>
    </location>
</feature>
<feature type="sequence variant" id="VAR_026893" description="In dbSNP:rs28509789." evidence="6">
    <original>S</original>
    <variation>A</variation>
    <location>
        <position position="536"/>
    </location>
</feature>
<feature type="sequence variant" id="VAR_026894" description="In dbSNP:rs3743211." evidence="3 4 5 6 7 15">
    <original>G</original>
    <variation>D</variation>
    <location>
        <position position="945"/>
    </location>
</feature>
<feature type="sequence conflict" description="In Ref. 7; CAD39045." evidence="12" ref="7">
    <original>R</original>
    <variation>H</variation>
    <location>
        <position position="592"/>
    </location>
</feature>
<feature type="sequence conflict" description="In Ref. 3; BAC87324." evidence="12" ref="3">
    <original>L</original>
    <variation>P</variation>
    <location>
        <position position="913"/>
    </location>
</feature>
<keyword id="KW-0007">Acetylation</keyword>
<keyword id="KW-0025">Alternative splicing</keyword>
<keyword id="KW-0597">Phosphoprotein</keyword>
<keyword id="KW-1267">Proteomics identification</keyword>
<keyword id="KW-1185">Reference proteome</keyword>
<organism>
    <name type="scientific">Homo sapiens</name>
    <name type="common">Human</name>
    <dbReference type="NCBI Taxonomy" id="9606"/>
    <lineage>
        <taxon>Eukaryota</taxon>
        <taxon>Metazoa</taxon>
        <taxon>Chordata</taxon>
        <taxon>Craniata</taxon>
        <taxon>Vertebrata</taxon>
        <taxon>Euteleostomi</taxon>
        <taxon>Mammalia</taxon>
        <taxon>Eutheria</taxon>
        <taxon>Euarchontoglires</taxon>
        <taxon>Primates</taxon>
        <taxon>Haplorrhini</taxon>
        <taxon>Catarrhini</taxon>
        <taxon>Hominidae</taxon>
        <taxon>Homo</taxon>
    </lineage>
</organism>
<dbReference type="EMBL" id="AL117540">
    <property type="protein sequence ID" value="CAB55985.3"/>
    <property type="status" value="ALT_INIT"/>
    <property type="molecule type" value="mRNA"/>
</dbReference>
<dbReference type="EMBL" id="AK125111">
    <property type="protein sequence ID" value="BAG54145.1"/>
    <property type="molecule type" value="mRNA"/>
</dbReference>
<dbReference type="EMBL" id="AK125604">
    <property type="protein sequence ID" value="BAC86215.1"/>
    <property type="molecule type" value="mRNA"/>
</dbReference>
<dbReference type="EMBL" id="AK128205">
    <property type="protein sequence ID" value="BAC87324.1"/>
    <property type="molecule type" value="mRNA"/>
</dbReference>
<dbReference type="EMBL" id="AF495726">
    <property type="protein sequence ID" value="AAQ06680.1"/>
    <property type="status" value="ALT_FRAME"/>
    <property type="molecule type" value="mRNA"/>
</dbReference>
<dbReference type="EMBL" id="CR533482">
    <property type="protein sequence ID" value="CAG38513.1"/>
    <property type="molecule type" value="mRNA"/>
</dbReference>
<dbReference type="EMBL" id="AC113208">
    <property type="status" value="NOT_ANNOTATED_CDS"/>
    <property type="molecule type" value="Genomic_DNA"/>
</dbReference>
<dbReference type="EMBL" id="BC001762">
    <property type="protein sequence ID" value="AAH01762.1"/>
    <property type="molecule type" value="mRNA"/>
</dbReference>
<dbReference type="EMBL" id="BC011379">
    <property type="protein sequence ID" value="AAH11379.2"/>
    <property type="molecule type" value="mRNA"/>
</dbReference>
<dbReference type="EMBL" id="BC011905">
    <property type="protein sequence ID" value="AAH11905.1"/>
    <property type="molecule type" value="mRNA"/>
</dbReference>
<dbReference type="EMBL" id="BC051235">
    <property type="protein sequence ID" value="AAH51235.1"/>
    <property type="molecule type" value="mRNA"/>
</dbReference>
<dbReference type="EMBL" id="BC110367">
    <property type="protein sequence ID" value="AAI10368.1"/>
    <property type="molecule type" value="mRNA"/>
</dbReference>
<dbReference type="EMBL" id="AL834382">
    <property type="protein sequence ID" value="CAD39045.1"/>
    <property type="status" value="ALT_FRAME"/>
    <property type="molecule type" value="mRNA"/>
</dbReference>
<dbReference type="CCDS" id="CCDS10276.1">
    <molecule id="Q6ZRI6-1"/>
</dbReference>
<dbReference type="PIR" id="T17295">
    <property type="entry name" value="T17295"/>
</dbReference>
<dbReference type="RefSeq" id="NP_056307.2">
    <molecule id="Q6ZRI6-1"/>
    <property type="nucleotide sequence ID" value="NM_015492.4"/>
</dbReference>
<dbReference type="RefSeq" id="XP_047288820.1">
    <molecule id="Q6ZRI6-1"/>
    <property type="nucleotide sequence ID" value="XM_047432864.1"/>
</dbReference>
<dbReference type="BioGRID" id="121235">
    <property type="interactions" value="81"/>
</dbReference>
<dbReference type="FunCoup" id="Q6ZRI6">
    <property type="interactions" value="937"/>
</dbReference>
<dbReference type="IntAct" id="Q6ZRI6">
    <property type="interactions" value="47"/>
</dbReference>
<dbReference type="STRING" id="9606.ENSP00000353854"/>
<dbReference type="GlyCosmos" id="Q6ZRI6">
    <property type="glycosylation" value="2 sites, 1 glycan"/>
</dbReference>
<dbReference type="GlyGen" id="Q6ZRI6">
    <property type="glycosylation" value="12 sites, 1 O-linked glycan (6 sites)"/>
</dbReference>
<dbReference type="iPTMnet" id="Q6ZRI6"/>
<dbReference type="PhosphoSitePlus" id="Q6ZRI6"/>
<dbReference type="BioMuta" id="C15orf39"/>
<dbReference type="DMDM" id="296439396"/>
<dbReference type="jPOST" id="Q6ZRI6"/>
<dbReference type="MassIVE" id="Q6ZRI6"/>
<dbReference type="PaxDb" id="9606-ENSP00000353854"/>
<dbReference type="PeptideAtlas" id="Q6ZRI6"/>
<dbReference type="ProteomicsDB" id="68134">
    <molecule id="Q6ZRI6-1"/>
</dbReference>
<dbReference type="ProteomicsDB" id="68135">
    <molecule id="Q6ZRI6-2"/>
</dbReference>
<dbReference type="ProteomicsDB" id="68136">
    <molecule id="Q6ZRI6-3"/>
</dbReference>
<dbReference type="Pumba" id="Q6ZRI6"/>
<dbReference type="Antibodypedia" id="50503">
    <property type="antibodies" value="70 antibodies from 15 providers"/>
</dbReference>
<dbReference type="DNASU" id="56905"/>
<dbReference type="Ensembl" id="ENST00000360639.6">
    <molecule id="Q6ZRI6-1"/>
    <property type="protein sequence ID" value="ENSP00000353854.2"/>
    <property type="gene ID" value="ENSG00000167173.19"/>
</dbReference>
<dbReference type="Ensembl" id="ENST00000394987.5">
    <molecule id="Q6ZRI6-1"/>
    <property type="protein sequence ID" value="ENSP00000378438.4"/>
    <property type="gene ID" value="ENSG00000167173.19"/>
</dbReference>
<dbReference type="Ensembl" id="ENST00000567617.1">
    <molecule id="Q6ZRI6-2"/>
    <property type="protein sequence ID" value="ENSP00000458025.1"/>
    <property type="gene ID" value="ENSG00000167173.19"/>
</dbReference>
<dbReference type="GeneID" id="56905"/>
<dbReference type="KEGG" id="hsa:56905"/>
<dbReference type="MANE-Select" id="ENST00000394987.5">
    <property type="protein sequence ID" value="ENSP00000378438.4"/>
    <property type="RefSeq nucleotide sequence ID" value="NM_015492.5"/>
    <property type="RefSeq protein sequence ID" value="NP_056307.3"/>
</dbReference>
<dbReference type="UCSC" id="uc002azp.4">
    <molecule id="Q6ZRI6-1"/>
    <property type="organism name" value="human"/>
</dbReference>
<dbReference type="AGR" id="HGNC:24497"/>
<dbReference type="CTD" id="56905"/>
<dbReference type="GeneCards" id="C15orf39"/>
<dbReference type="HGNC" id="HGNC:24497">
    <property type="gene designation" value="C15orf39"/>
</dbReference>
<dbReference type="HPA" id="ENSG00000167173">
    <property type="expression patterns" value="Tissue enhanced (bone marrow, testis)"/>
</dbReference>
<dbReference type="neXtProt" id="NX_Q6ZRI6"/>
<dbReference type="OpenTargets" id="ENSG00000167173"/>
<dbReference type="PharmGKB" id="PA142672275"/>
<dbReference type="VEuPathDB" id="HostDB:ENSG00000167173"/>
<dbReference type="eggNOG" id="ENOG502QW16">
    <property type="taxonomic scope" value="Eukaryota"/>
</dbReference>
<dbReference type="GeneTree" id="ENSGT00390000002672"/>
<dbReference type="HOGENOM" id="CLU_322865_0_0_1"/>
<dbReference type="InParanoid" id="Q6ZRI6"/>
<dbReference type="OMA" id="DTYSYPS"/>
<dbReference type="OrthoDB" id="9908305at2759"/>
<dbReference type="PAN-GO" id="Q6ZRI6">
    <property type="GO annotations" value="0 GO annotations based on evolutionary models"/>
</dbReference>
<dbReference type="PhylomeDB" id="Q6ZRI6"/>
<dbReference type="TreeFam" id="TF338672"/>
<dbReference type="PathwayCommons" id="Q6ZRI6"/>
<dbReference type="SignaLink" id="Q6ZRI6"/>
<dbReference type="BioGRID-ORCS" id="56905">
    <property type="hits" value="15 hits in 1132 CRISPR screens"/>
</dbReference>
<dbReference type="ChiTaRS" id="C15orf39">
    <property type="organism name" value="human"/>
</dbReference>
<dbReference type="GenomeRNAi" id="56905"/>
<dbReference type="Pharos" id="Q6ZRI6">
    <property type="development level" value="Tdark"/>
</dbReference>
<dbReference type="PRO" id="PR:Q6ZRI6"/>
<dbReference type="Proteomes" id="UP000005640">
    <property type="component" value="Chromosome 15"/>
</dbReference>
<dbReference type="RNAct" id="Q6ZRI6">
    <property type="molecule type" value="protein"/>
</dbReference>
<dbReference type="Bgee" id="ENSG00000167173">
    <property type="expression patterns" value="Expressed in left testis and 149 other cell types or tissues"/>
</dbReference>
<dbReference type="ExpressionAtlas" id="Q6ZRI6">
    <property type="expression patterns" value="baseline and differential"/>
</dbReference>
<dbReference type="GO" id="GO:0005829">
    <property type="term" value="C:cytosol"/>
    <property type="evidence" value="ECO:0000314"/>
    <property type="project" value="HPA"/>
</dbReference>
<dbReference type="InterPro" id="IPR037656">
    <property type="entry name" value="DUF5525"/>
</dbReference>
<dbReference type="PANTHER" id="PTHR28422">
    <property type="entry name" value="SIMILAR TO HUMAN CHROMOSOME 15 OPEN READING FRAME 39"/>
    <property type="match status" value="1"/>
</dbReference>
<dbReference type="PANTHER" id="PTHR28422:SF1">
    <property type="entry name" value="SIMILAR TO HUMAN CHROMOSOME 15 OPEN READING FRAME 39"/>
    <property type="match status" value="1"/>
</dbReference>
<dbReference type="Pfam" id="PF17663">
    <property type="entry name" value="DUF5525"/>
    <property type="match status" value="1"/>
</dbReference>
<gene>
    <name type="primary">C15orf39</name>
    <name type="ORF">FP6578</name>
</gene>
<reference key="1">
    <citation type="journal article" date="2001" name="Genome Res.">
        <title>Towards a catalog of human genes and proteins: sequencing and analysis of 500 novel complete protein coding human cDNAs.</title>
        <authorList>
            <person name="Wiemann S."/>
            <person name="Weil B."/>
            <person name="Wellenreuther R."/>
            <person name="Gassenhuber J."/>
            <person name="Glassl S."/>
            <person name="Ansorge W."/>
            <person name="Boecher M."/>
            <person name="Bloecker H."/>
            <person name="Bauersachs S."/>
            <person name="Blum H."/>
            <person name="Lauber J."/>
            <person name="Duesterhoeft A."/>
            <person name="Beyer A."/>
            <person name="Koehrer K."/>
            <person name="Strack N."/>
            <person name="Mewes H.-W."/>
            <person name="Ottenwaelder B."/>
            <person name="Obermaier B."/>
            <person name="Tampe J."/>
            <person name="Heubner D."/>
            <person name="Wambutt R."/>
            <person name="Korn B."/>
            <person name="Klein M."/>
            <person name="Poustka A."/>
        </authorList>
    </citation>
    <scope>NUCLEOTIDE SEQUENCE [LARGE SCALE MRNA] (ISOFORM 3)</scope>
    <scope>VARIANT ASP-945</scope>
    <source>
        <tissue>Testis</tissue>
    </source>
</reference>
<reference key="2">
    <citation type="journal article" date="2004" name="Nat. Genet.">
        <title>Complete sequencing and characterization of 21,243 full-length human cDNAs.</title>
        <authorList>
            <person name="Ota T."/>
            <person name="Suzuki Y."/>
            <person name="Nishikawa T."/>
            <person name="Otsuki T."/>
            <person name="Sugiyama T."/>
            <person name="Irie R."/>
            <person name="Wakamatsu A."/>
            <person name="Hayashi K."/>
            <person name="Sato H."/>
            <person name="Nagai K."/>
            <person name="Kimura K."/>
            <person name="Makita H."/>
            <person name="Sekine M."/>
            <person name="Obayashi M."/>
            <person name="Nishi T."/>
            <person name="Shibahara T."/>
            <person name="Tanaka T."/>
            <person name="Ishii S."/>
            <person name="Yamamoto J."/>
            <person name="Saito K."/>
            <person name="Kawai Y."/>
            <person name="Isono Y."/>
            <person name="Nakamura Y."/>
            <person name="Nagahari K."/>
            <person name="Murakami K."/>
            <person name="Yasuda T."/>
            <person name="Iwayanagi T."/>
            <person name="Wagatsuma M."/>
            <person name="Shiratori A."/>
            <person name="Sudo H."/>
            <person name="Hosoiri T."/>
            <person name="Kaku Y."/>
            <person name="Kodaira H."/>
            <person name="Kondo H."/>
            <person name="Sugawara M."/>
            <person name="Takahashi M."/>
            <person name="Kanda K."/>
            <person name="Yokoi T."/>
            <person name="Furuya T."/>
            <person name="Kikkawa E."/>
            <person name="Omura Y."/>
            <person name="Abe K."/>
            <person name="Kamihara K."/>
            <person name="Katsuta N."/>
            <person name="Sato K."/>
            <person name="Tanikawa M."/>
            <person name="Yamazaki M."/>
            <person name="Ninomiya K."/>
            <person name="Ishibashi T."/>
            <person name="Yamashita H."/>
            <person name="Murakawa K."/>
            <person name="Fujimori K."/>
            <person name="Tanai H."/>
            <person name="Kimata M."/>
            <person name="Watanabe M."/>
            <person name="Hiraoka S."/>
            <person name="Chiba Y."/>
            <person name="Ishida S."/>
            <person name="Ono Y."/>
            <person name="Takiguchi S."/>
            <person name="Watanabe S."/>
            <person name="Yosida M."/>
            <person name="Hotuta T."/>
            <person name="Kusano J."/>
            <person name="Kanehori K."/>
            <person name="Takahashi-Fujii A."/>
            <person name="Hara H."/>
            <person name="Tanase T.-O."/>
            <person name="Nomura Y."/>
            <person name="Togiya S."/>
            <person name="Komai F."/>
            <person name="Hara R."/>
            <person name="Takeuchi K."/>
            <person name="Arita M."/>
            <person name="Imose N."/>
            <person name="Musashino K."/>
            <person name="Yuuki H."/>
            <person name="Oshima A."/>
            <person name="Sasaki N."/>
            <person name="Aotsuka S."/>
            <person name="Yoshikawa Y."/>
            <person name="Matsunawa H."/>
            <person name="Ichihara T."/>
            <person name="Shiohata N."/>
            <person name="Sano S."/>
            <person name="Moriya S."/>
            <person name="Momiyama H."/>
            <person name="Satoh N."/>
            <person name="Takami S."/>
            <person name="Terashima Y."/>
            <person name="Suzuki O."/>
            <person name="Nakagawa S."/>
            <person name="Senoh A."/>
            <person name="Mizoguchi H."/>
            <person name="Goto Y."/>
            <person name="Shimizu F."/>
            <person name="Wakebe H."/>
            <person name="Hishigaki H."/>
            <person name="Watanabe T."/>
            <person name="Sugiyama A."/>
            <person name="Takemoto M."/>
            <person name="Kawakami B."/>
            <person name="Yamazaki M."/>
            <person name="Watanabe K."/>
            <person name="Kumagai A."/>
            <person name="Itakura S."/>
            <person name="Fukuzumi Y."/>
            <person name="Fujimori Y."/>
            <person name="Komiyama M."/>
            <person name="Tashiro H."/>
            <person name="Tanigami A."/>
            <person name="Fujiwara T."/>
            <person name="Ono T."/>
            <person name="Yamada K."/>
            <person name="Fujii Y."/>
            <person name="Ozaki K."/>
            <person name="Hirao M."/>
            <person name="Ohmori Y."/>
            <person name="Kawabata A."/>
            <person name="Hikiji T."/>
            <person name="Kobatake N."/>
            <person name="Inagaki H."/>
            <person name="Ikema Y."/>
            <person name="Okamoto S."/>
            <person name="Okitani R."/>
            <person name="Kawakami T."/>
            <person name="Noguchi S."/>
            <person name="Itoh T."/>
            <person name="Shigeta K."/>
            <person name="Senba T."/>
            <person name="Matsumura K."/>
            <person name="Nakajima Y."/>
            <person name="Mizuno T."/>
            <person name="Morinaga M."/>
            <person name="Sasaki M."/>
            <person name="Togashi T."/>
            <person name="Oyama M."/>
            <person name="Hata H."/>
            <person name="Watanabe M."/>
            <person name="Komatsu T."/>
            <person name="Mizushima-Sugano J."/>
            <person name="Satoh T."/>
            <person name="Shirai Y."/>
            <person name="Takahashi Y."/>
            <person name="Nakagawa K."/>
            <person name="Okumura K."/>
            <person name="Nagase T."/>
            <person name="Nomura N."/>
            <person name="Kikuchi H."/>
            <person name="Masuho Y."/>
            <person name="Yamashita R."/>
            <person name="Nakai K."/>
            <person name="Yada T."/>
            <person name="Nakamura Y."/>
            <person name="Ohara O."/>
            <person name="Isogai T."/>
            <person name="Sugano S."/>
        </authorList>
    </citation>
    <scope>NUCLEOTIDE SEQUENCE [LARGE SCALE MRNA] (ISOFORM 1)</scope>
    <scope>VARIANTS PRO-119; ASP-491 AND ASP-945</scope>
    <source>
        <tissue>Spleen</tissue>
        <tissue>Testis</tissue>
        <tissue>Tongue</tissue>
    </source>
</reference>
<reference key="3">
    <citation type="journal article" date="2004" name="Proc. Natl. Acad. Sci. U.S.A.">
        <title>Large-scale cDNA transfection screening for genes related to cancer development and progression.</title>
        <authorList>
            <person name="Wan D."/>
            <person name="Gong Y."/>
            <person name="Qin W."/>
            <person name="Zhang P."/>
            <person name="Li J."/>
            <person name="Wei L."/>
            <person name="Zhou X."/>
            <person name="Li H."/>
            <person name="Qiu X."/>
            <person name="Zhong F."/>
            <person name="He L."/>
            <person name="Yu J."/>
            <person name="Yao G."/>
            <person name="Jiang H."/>
            <person name="Qian L."/>
            <person name="Yu Y."/>
            <person name="Shu H."/>
            <person name="Chen X."/>
            <person name="Xu H."/>
            <person name="Guo M."/>
            <person name="Pan Z."/>
            <person name="Chen Y."/>
            <person name="Ge C."/>
            <person name="Yang S."/>
            <person name="Gu J."/>
        </authorList>
    </citation>
    <scope>NUCLEOTIDE SEQUENCE [LARGE SCALE MRNA] (ISOFORM 1)</scope>
    <scope>VARIANTS ASP-491; ALA-536 AND ASP-945</scope>
</reference>
<reference key="4">
    <citation type="submission" date="2004-06" db="EMBL/GenBank/DDBJ databases">
        <title>Cloning of human full open reading frames in Gateway(TM) system entry vector (pDONR201).</title>
        <authorList>
            <person name="Ebert L."/>
            <person name="Schick M."/>
            <person name="Neubert P."/>
            <person name="Schatten R."/>
            <person name="Henze S."/>
            <person name="Korn B."/>
        </authorList>
    </citation>
    <scope>NUCLEOTIDE SEQUENCE [LARGE SCALE MRNA] (ISOFORM 3)</scope>
    <scope>VARIANT ASP-945</scope>
</reference>
<reference key="5">
    <citation type="journal article" date="2006" name="Nature">
        <title>Analysis of the DNA sequence and duplication history of human chromosome 15.</title>
        <authorList>
            <person name="Zody M.C."/>
            <person name="Garber M."/>
            <person name="Sharpe T."/>
            <person name="Young S.K."/>
            <person name="Rowen L."/>
            <person name="O'Neill K."/>
            <person name="Whittaker C.A."/>
            <person name="Kamal M."/>
            <person name="Chang J.L."/>
            <person name="Cuomo C.A."/>
            <person name="Dewar K."/>
            <person name="FitzGerald M.G."/>
            <person name="Kodira C.D."/>
            <person name="Madan A."/>
            <person name="Qin S."/>
            <person name="Yang X."/>
            <person name="Abbasi N."/>
            <person name="Abouelleil A."/>
            <person name="Arachchi H.M."/>
            <person name="Baradarani L."/>
            <person name="Birditt B."/>
            <person name="Bloom S."/>
            <person name="Bloom T."/>
            <person name="Borowsky M.L."/>
            <person name="Burke J."/>
            <person name="Butler J."/>
            <person name="Cook A."/>
            <person name="DeArellano K."/>
            <person name="DeCaprio D."/>
            <person name="Dorris L. III"/>
            <person name="Dors M."/>
            <person name="Eichler E.E."/>
            <person name="Engels R."/>
            <person name="Fahey J."/>
            <person name="Fleetwood P."/>
            <person name="Friedman C."/>
            <person name="Gearin G."/>
            <person name="Hall J.L."/>
            <person name="Hensley G."/>
            <person name="Johnson E."/>
            <person name="Jones C."/>
            <person name="Kamat A."/>
            <person name="Kaur A."/>
            <person name="Locke D.P."/>
            <person name="Madan A."/>
            <person name="Munson G."/>
            <person name="Jaffe D.B."/>
            <person name="Lui A."/>
            <person name="Macdonald P."/>
            <person name="Mauceli E."/>
            <person name="Naylor J.W."/>
            <person name="Nesbitt R."/>
            <person name="Nicol R."/>
            <person name="O'Leary S.B."/>
            <person name="Ratcliffe A."/>
            <person name="Rounsley S."/>
            <person name="She X."/>
            <person name="Sneddon K.M.B."/>
            <person name="Stewart S."/>
            <person name="Sougnez C."/>
            <person name="Stone S.M."/>
            <person name="Topham K."/>
            <person name="Vincent D."/>
            <person name="Wang S."/>
            <person name="Zimmer A.R."/>
            <person name="Birren B.W."/>
            <person name="Hood L."/>
            <person name="Lander E.S."/>
            <person name="Nusbaum C."/>
        </authorList>
    </citation>
    <scope>NUCLEOTIDE SEQUENCE [LARGE SCALE GENOMIC DNA]</scope>
</reference>
<reference key="6">
    <citation type="journal article" date="2004" name="Genome Res.">
        <title>The status, quality, and expansion of the NIH full-length cDNA project: the Mammalian Gene Collection (MGC).</title>
        <authorList>
            <consortium name="The MGC Project Team"/>
        </authorList>
    </citation>
    <scope>NUCLEOTIDE SEQUENCE [LARGE SCALE MRNA] (ISOFORMS 1 AND 3)</scope>
    <scope>VARIANTS ASP-491 AND ASP-945</scope>
    <source>
        <tissue>Eye</tissue>
        <tissue>Lymph</tissue>
        <tissue>Muscle</tissue>
    </source>
</reference>
<reference key="7">
    <citation type="journal article" date="2007" name="BMC Genomics">
        <title>The full-ORF clone resource of the German cDNA consortium.</title>
        <authorList>
            <person name="Bechtel S."/>
            <person name="Rosenfelder H."/>
            <person name="Duda A."/>
            <person name="Schmidt C.P."/>
            <person name="Ernst U."/>
            <person name="Wellenreuther R."/>
            <person name="Mehrle A."/>
            <person name="Schuster C."/>
            <person name="Bahr A."/>
            <person name="Bloecker H."/>
            <person name="Heubner D."/>
            <person name="Hoerlein A."/>
            <person name="Michel G."/>
            <person name="Wedler H."/>
            <person name="Koehrer K."/>
            <person name="Ottenwaelder B."/>
            <person name="Poustka A."/>
            <person name="Wiemann S."/>
            <person name="Schupp I."/>
        </authorList>
    </citation>
    <scope>NUCLEOTIDE SEQUENCE [LARGE SCALE MRNA] OF 561-1047 (ISOFORM 2)</scope>
</reference>
<reference key="8">
    <citation type="journal article" date="2008" name="Proc. Natl. Acad. Sci. U.S.A.">
        <title>A quantitative atlas of mitotic phosphorylation.</title>
        <authorList>
            <person name="Dephoure N."/>
            <person name="Zhou C."/>
            <person name="Villen J."/>
            <person name="Beausoleil S.A."/>
            <person name="Bakalarski C.E."/>
            <person name="Elledge S.J."/>
            <person name="Gygi S.P."/>
        </authorList>
    </citation>
    <scope>PHOSPHORYLATION [LARGE SCALE ANALYSIS] AT SER-208; SER-391 AND THR-397</scope>
    <scope>IDENTIFICATION BY MASS SPECTROMETRY [LARGE SCALE ANALYSIS]</scope>
    <source>
        <tissue>Cervix carcinoma</tissue>
    </source>
</reference>
<reference key="9">
    <citation type="journal article" date="2009" name="Science">
        <title>Lysine acetylation targets protein complexes and co-regulates major cellular functions.</title>
        <authorList>
            <person name="Choudhary C."/>
            <person name="Kumar C."/>
            <person name="Gnad F."/>
            <person name="Nielsen M.L."/>
            <person name="Rehman M."/>
            <person name="Walther T.C."/>
            <person name="Olsen J.V."/>
            <person name="Mann M."/>
        </authorList>
    </citation>
    <scope>ACETYLATION [LARGE SCALE ANALYSIS] AT LYS-17</scope>
    <scope>IDENTIFICATION BY MASS SPECTROMETRY [LARGE SCALE ANALYSIS]</scope>
</reference>
<reference key="10">
    <citation type="journal article" date="2013" name="J. Proteome Res.">
        <title>Toward a comprehensive characterization of a human cancer cell phosphoproteome.</title>
        <authorList>
            <person name="Zhou H."/>
            <person name="Di Palma S."/>
            <person name="Preisinger C."/>
            <person name="Peng M."/>
            <person name="Polat A.N."/>
            <person name="Heck A.J."/>
            <person name="Mohammed S."/>
        </authorList>
    </citation>
    <scope>PHOSPHORYLATION [LARGE SCALE ANALYSIS] AT SER-299; SER-455 AND SER-956</scope>
    <scope>VARIANT [LARGE SCALE ANALYSIS] ASP-491</scope>
    <scope>VARIANT [LARGE SCALE ANALYSIS] ASP-945</scope>
    <scope>IDENTIFICATION BY MASS SPECTROMETRY [LARGE SCALE ANALYSIS]</scope>
    <source>
        <tissue>Cervix carcinoma</tissue>
        <tissue>Erythroleukemia</tissue>
    </source>
</reference>
<name>CO039_HUMAN</name>
<accession>Q6ZRI6</accession>
<accession>B3KWI3</accession>
<accession>C9J888</accession>
<accession>Q71JB1</accession>
<accession>Q7L3S0</accession>
<accession>Q8N3F2</accession>
<accession>Q96FB6</accession>
<accession>Q9NTU5</accession>
<comment type="alternative products">
    <event type="alternative splicing"/>
    <isoform>
        <id>Q6ZRI6-1</id>
        <name>1</name>
        <sequence type="displayed"/>
    </isoform>
    <isoform>
        <id>Q6ZRI6-2</id>
        <name>2</name>
        <sequence type="described" ref="VSP_019540 VSP_019541"/>
    </isoform>
    <isoform>
        <id>Q6ZRI6-3</id>
        <name>3</name>
        <sequence type="described" ref="VSP_019538 VSP_019539"/>
    </isoform>
</comment>
<comment type="sequence caution" evidence="12">
    <conflict type="frameshift">
        <sequence resource="EMBL-CDS" id="AAQ06680"/>
    </conflict>
</comment>
<comment type="sequence caution" evidence="12">
    <conflict type="erroneous initiation">
        <sequence resource="EMBL-CDS" id="CAB55985"/>
    </conflict>
    <text>Extended N-terminus.</text>
</comment>
<comment type="sequence caution" evidence="12">
    <conflict type="frameshift">
        <sequence resource="EMBL-CDS" id="CAD39045"/>
    </conflict>
</comment>
<protein>
    <recommendedName>
        <fullName>Uncharacterized protein C15orf39</fullName>
    </recommendedName>
</protein>
<proteinExistence type="evidence at protein level"/>
<sequence>MAEKRPLRTLGPVMYGKLPRLETDSGLEHSLPHSVGNQDPCTYKGSYFSCPMAGTPKAESEQLASWTPYPPLYSTGMAGPPLQADNLLTNCLFYRSPAEGPEKMQDSSPVELLPFSPQAHSYPGPPLAAPKPVYRNPLCYGLSTCLGEGAVKRPLDVDWTLATGPLLPSADPPCSLAPAPSKGQTLDGTFLRGVPAEGSSKDSSGSFSPCQPFLEKYQTIHSTGFLASRYTGPYPRNSKQAMSEGPSSPWTQLAQPLGPPCQDTGPTHYPPPHHPPPHPPQALPCPPACRHPEKQGSYSPALPLQPLGGHKGTGYQAGGLGSPYLRQQAAQAPYIPPLGLDAYPYPSAPLPAPSPGLKLEPPLTPRCPLDFAPQTLSFPYARDDLSLYGASPGLGGTPPSQNNVRAVPQPGAFQRACQPLPASQPCSEPVRPAQEAEEKTWLPSCRKEKLQPRLSEHSGPPIVIRDSPVPCTPPALPPCARECQSLPQKEGARPPSSPPMPVIDNVFSLAPYRDYLDVPAPEATTEPDSATAEPDSAPATSEGQDKGCRGTLPAQEGPSGSKPLRGSLKEEVALDLSVRKPTAEASPVKASRSVEHAKPTAAMDVPDVGNMVSDLPGLKKIDTEAPGLPGVPVTTDAMPRTNFHSSVAFMFRKFKILRPAPLPAAVVPSTPTSAPAPTQPAPTPTSGPIGLRILAQQPLSVTCFSLALPSPPAVAVASPAPAPAPSPAPARAQAPASARDPAPAPAPVAGPAPASTSAPGDSLEQHFTGLHASLCDAISGSVAHSPPEKLREWLETAGPWGQAAWQDCQGVQGLLAKLLSQLQRFDRTHRCPFPHVVRAGAIFVPIHLVKERLFPRLPPASVDHVLQEHRVELRPTTLSEERALRELALPGCTSRMLKLLALRQLPDIYPDLLGLQWRDCVRRQLGDFDTEAGAVSSSEPTVARGEPESLALAQKSPAPKVRKPGRKPPTPGPEKAEAAAGEESCGASPTPATSASPPGPTLKARFRSLLETAWLNGLALPTWGHKSSRPDQPSPCPQLLDSQSHHL</sequence>